<comment type="function">
    <text evidence="1">F(1)F(0) ATP synthase produces ATP from ADP in the presence of a proton or sodium gradient. F-type ATPases consist of two structural domains, F(1) containing the extramembraneous catalytic core and F(0) containing the membrane proton channel, linked together by a central stalk and a peripheral stalk. During catalysis, ATP synthesis in the catalytic domain of F(1) is coupled via a rotary mechanism of the central stalk subunits to proton translocation.</text>
</comment>
<comment type="function">
    <text evidence="1">Component of the F(0) channel, it forms part of the peripheral stalk, linking F(1) to F(0).</text>
</comment>
<comment type="subunit">
    <text evidence="1">F-type ATPases have 2 components, F(1) - the catalytic core - and F(0) - the membrane proton channel. F(1) has five subunits: alpha(3), beta(3), gamma(1), delta(1), epsilon(1). F(0) has three main subunits: a(1), b(2) and c(10-14). The alpha and beta chains form an alternating ring which encloses part of the gamma chain. F(1) is attached to F(0) by a central stalk formed by the gamma and epsilon chains, while a peripheral stalk is formed by the delta and b chains.</text>
</comment>
<comment type="subcellular location">
    <subcellularLocation>
        <location evidence="1">Cell inner membrane</location>
        <topology evidence="1">Single-pass membrane protein</topology>
    </subcellularLocation>
</comment>
<comment type="similarity">
    <text evidence="1">Belongs to the ATPase B chain family.</text>
</comment>
<keyword id="KW-0066">ATP synthesis</keyword>
<keyword id="KW-0997">Cell inner membrane</keyword>
<keyword id="KW-1003">Cell membrane</keyword>
<keyword id="KW-0138">CF(0)</keyword>
<keyword id="KW-0375">Hydrogen ion transport</keyword>
<keyword id="KW-0406">Ion transport</keyword>
<keyword id="KW-0472">Membrane</keyword>
<keyword id="KW-0812">Transmembrane</keyword>
<keyword id="KW-1133">Transmembrane helix</keyword>
<keyword id="KW-0813">Transport</keyword>
<sequence>MNLNATLFAQMVVFLVLAWFTMKFVWPPLINALDERSKKIADGLAAAEKGKAELDAAHKRVDQELAQARNDGQQRIADAEKRAQAVAEEIKANAQAEAARIVAQAKAEAEQQIVKAREALRGEVAALAVKGAEQILKREVDQTAHAQLLNQLKAEL</sequence>
<reference key="1">
    <citation type="submission" date="2008-02" db="EMBL/GenBank/DDBJ databases">
        <title>Complete sequence of chromosome 1 of Burkholderia cenocepacia MC0-3.</title>
        <authorList>
            <person name="Copeland A."/>
            <person name="Lucas S."/>
            <person name="Lapidus A."/>
            <person name="Barry K."/>
            <person name="Bruce D."/>
            <person name="Goodwin L."/>
            <person name="Glavina del Rio T."/>
            <person name="Dalin E."/>
            <person name="Tice H."/>
            <person name="Pitluck S."/>
            <person name="Chain P."/>
            <person name="Malfatti S."/>
            <person name="Shin M."/>
            <person name="Vergez L."/>
            <person name="Schmutz J."/>
            <person name="Larimer F."/>
            <person name="Land M."/>
            <person name="Hauser L."/>
            <person name="Kyrpides N."/>
            <person name="Mikhailova N."/>
            <person name="Tiedje J."/>
            <person name="Richardson P."/>
        </authorList>
    </citation>
    <scope>NUCLEOTIDE SEQUENCE [LARGE SCALE GENOMIC DNA]</scope>
    <source>
        <strain>MC0-3</strain>
    </source>
</reference>
<organism>
    <name type="scientific">Burkholderia orbicola (strain MC0-3)</name>
    <dbReference type="NCBI Taxonomy" id="406425"/>
    <lineage>
        <taxon>Bacteria</taxon>
        <taxon>Pseudomonadati</taxon>
        <taxon>Pseudomonadota</taxon>
        <taxon>Betaproteobacteria</taxon>
        <taxon>Burkholderiales</taxon>
        <taxon>Burkholderiaceae</taxon>
        <taxon>Burkholderia</taxon>
        <taxon>Burkholderia cepacia complex</taxon>
        <taxon>Burkholderia orbicola</taxon>
    </lineage>
</organism>
<feature type="chain" id="PRO_0000368382" description="ATP synthase subunit b">
    <location>
        <begin position="1"/>
        <end position="156"/>
    </location>
</feature>
<feature type="transmembrane region" description="Helical" evidence="1">
    <location>
        <begin position="7"/>
        <end position="29"/>
    </location>
</feature>
<evidence type="ECO:0000255" key="1">
    <source>
        <dbReference type="HAMAP-Rule" id="MF_01398"/>
    </source>
</evidence>
<accession>B1JSV3</accession>
<gene>
    <name evidence="1" type="primary">atpF</name>
    <name type="ordered locus">Bcenmc03_0118</name>
</gene>
<name>ATPF_BURO0</name>
<proteinExistence type="inferred from homology"/>
<protein>
    <recommendedName>
        <fullName evidence="1">ATP synthase subunit b</fullName>
    </recommendedName>
    <alternativeName>
        <fullName evidence="1">ATP synthase F(0) sector subunit b</fullName>
    </alternativeName>
    <alternativeName>
        <fullName evidence="1">ATPase subunit I</fullName>
    </alternativeName>
    <alternativeName>
        <fullName evidence="1">F-type ATPase subunit b</fullName>
        <shortName evidence="1">F-ATPase subunit b</shortName>
    </alternativeName>
</protein>
<dbReference type="EMBL" id="CP000958">
    <property type="protein sequence ID" value="ACA89298.1"/>
    <property type="molecule type" value="Genomic_DNA"/>
</dbReference>
<dbReference type="RefSeq" id="WP_006477283.1">
    <property type="nucleotide sequence ID" value="NC_010508.1"/>
</dbReference>
<dbReference type="SMR" id="B1JSV3"/>
<dbReference type="KEGG" id="bcm:Bcenmc03_0118"/>
<dbReference type="HOGENOM" id="CLU_079215_4_5_4"/>
<dbReference type="Proteomes" id="UP000002169">
    <property type="component" value="Chromosome 1"/>
</dbReference>
<dbReference type="GO" id="GO:0005886">
    <property type="term" value="C:plasma membrane"/>
    <property type="evidence" value="ECO:0007669"/>
    <property type="project" value="UniProtKB-SubCell"/>
</dbReference>
<dbReference type="GO" id="GO:0045259">
    <property type="term" value="C:proton-transporting ATP synthase complex"/>
    <property type="evidence" value="ECO:0007669"/>
    <property type="project" value="UniProtKB-KW"/>
</dbReference>
<dbReference type="GO" id="GO:0046933">
    <property type="term" value="F:proton-transporting ATP synthase activity, rotational mechanism"/>
    <property type="evidence" value="ECO:0007669"/>
    <property type="project" value="UniProtKB-UniRule"/>
</dbReference>
<dbReference type="GO" id="GO:0046961">
    <property type="term" value="F:proton-transporting ATPase activity, rotational mechanism"/>
    <property type="evidence" value="ECO:0007669"/>
    <property type="project" value="TreeGrafter"/>
</dbReference>
<dbReference type="CDD" id="cd06503">
    <property type="entry name" value="ATP-synt_Fo_b"/>
    <property type="match status" value="1"/>
</dbReference>
<dbReference type="Gene3D" id="6.10.250.1580">
    <property type="match status" value="1"/>
</dbReference>
<dbReference type="HAMAP" id="MF_01398">
    <property type="entry name" value="ATP_synth_b_bprime"/>
    <property type="match status" value="1"/>
</dbReference>
<dbReference type="InterPro" id="IPR028987">
    <property type="entry name" value="ATP_synth_B-like_membr_sf"/>
</dbReference>
<dbReference type="InterPro" id="IPR002146">
    <property type="entry name" value="ATP_synth_b/b'su_bac/chlpt"/>
</dbReference>
<dbReference type="InterPro" id="IPR005864">
    <property type="entry name" value="ATP_synth_F0_bsu_bac"/>
</dbReference>
<dbReference type="InterPro" id="IPR050059">
    <property type="entry name" value="ATP_synthase_B_chain"/>
</dbReference>
<dbReference type="NCBIfam" id="TIGR01144">
    <property type="entry name" value="ATP_synt_b"/>
    <property type="match status" value="1"/>
</dbReference>
<dbReference type="NCBIfam" id="NF004411">
    <property type="entry name" value="PRK05759.1-2"/>
    <property type="match status" value="1"/>
</dbReference>
<dbReference type="PANTHER" id="PTHR33445:SF1">
    <property type="entry name" value="ATP SYNTHASE SUBUNIT B"/>
    <property type="match status" value="1"/>
</dbReference>
<dbReference type="PANTHER" id="PTHR33445">
    <property type="entry name" value="ATP SYNTHASE SUBUNIT B', CHLOROPLASTIC"/>
    <property type="match status" value="1"/>
</dbReference>
<dbReference type="Pfam" id="PF00430">
    <property type="entry name" value="ATP-synt_B"/>
    <property type="match status" value="1"/>
</dbReference>
<dbReference type="SUPFAM" id="SSF81573">
    <property type="entry name" value="F1F0 ATP synthase subunit B, membrane domain"/>
    <property type="match status" value="1"/>
</dbReference>